<protein>
    <recommendedName>
        <fullName evidence="1">ADP-L-glycero-D-manno-heptose-6-epimerase</fullName>
        <ecNumber evidence="1">5.1.3.20</ecNumber>
    </recommendedName>
    <alternativeName>
        <fullName evidence="1">ADP-L-glycero-beta-D-manno-heptose-6-epimerase</fullName>
        <shortName evidence="1">ADP-glyceromanno-heptose 6-epimerase</shortName>
        <shortName evidence="1">ADP-hep 6-epimerase</shortName>
        <shortName evidence="1">AGME</shortName>
    </alternativeName>
</protein>
<reference key="1">
    <citation type="submission" date="2007-09" db="EMBL/GenBank/DDBJ databases">
        <title>Complete sequence of chromosome of Serratia proteamaculans 568.</title>
        <authorList>
            <consortium name="US DOE Joint Genome Institute"/>
            <person name="Copeland A."/>
            <person name="Lucas S."/>
            <person name="Lapidus A."/>
            <person name="Barry K."/>
            <person name="Glavina del Rio T."/>
            <person name="Dalin E."/>
            <person name="Tice H."/>
            <person name="Pitluck S."/>
            <person name="Chain P."/>
            <person name="Malfatti S."/>
            <person name="Shin M."/>
            <person name="Vergez L."/>
            <person name="Schmutz J."/>
            <person name="Larimer F."/>
            <person name="Land M."/>
            <person name="Hauser L."/>
            <person name="Kyrpides N."/>
            <person name="Kim E."/>
            <person name="Taghavi S."/>
            <person name="Newman L."/>
            <person name="Vangronsveld J."/>
            <person name="van der Lelie D."/>
            <person name="Richardson P."/>
        </authorList>
    </citation>
    <scope>NUCLEOTIDE SEQUENCE [LARGE SCALE GENOMIC DNA]</scope>
    <source>
        <strain>568</strain>
    </source>
</reference>
<proteinExistence type="inferred from homology"/>
<dbReference type="EC" id="5.1.3.20" evidence="1"/>
<dbReference type="EMBL" id="CP000826">
    <property type="protein sequence ID" value="ABV43918.1"/>
    <property type="molecule type" value="Genomic_DNA"/>
</dbReference>
<dbReference type="SMR" id="A8GLC8"/>
<dbReference type="STRING" id="399741.Spro_4825"/>
<dbReference type="KEGG" id="spe:Spro_4825"/>
<dbReference type="eggNOG" id="COG0451">
    <property type="taxonomic scope" value="Bacteria"/>
</dbReference>
<dbReference type="HOGENOM" id="CLU_007383_1_3_6"/>
<dbReference type="OrthoDB" id="9803010at2"/>
<dbReference type="UniPathway" id="UPA00356">
    <property type="reaction ID" value="UER00440"/>
</dbReference>
<dbReference type="GO" id="GO:0008712">
    <property type="term" value="F:ADP-glyceromanno-heptose 6-epimerase activity"/>
    <property type="evidence" value="ECO:0007669"/>
    <property type="project" value="UniProtKB-UniRule"/>
</dbReference>
<dbReference type="GO" id="GO:0050661">
    <property type="term" value="F:NADP binding"/>
    <property type="evidence" value="ECO:0007669"/>
    <property type="project" value="InterPro"/>
</dbReference>
<dbReference type="GO" id="GO:0097171">
    <property type="term" value="P:ADP-L-glycero-beta-D-manno-heptose biosynthetic process"/>
    <property type="evidence" value="ECO:0007669"/>
    <property type="project" value="UniProtKB-UniPathway"/>
</dbReference>
<dbReference type="GO" id="GO:0005975">
    <property type="term" value="P:carbohydrate metabolic process"/>
    <property type="evidence" value="ECO:0007669"/>
    <property type="project" value="UniProtKB-UniRule"/>
</dbReference>
<dbReference type="CDD" id="cd05248">
    <property type="entry name" value="ADP_GME_SDR_e"/>
    <property type="match status" value="1"/>
</dbReference>
<dbReference type="Gene3D" id="3.40.50.720">
    <property type="entry name" value="NAD(P)-binding Rossmann-like Domain"/>
    <property type="match status" value="1"/>
</dbReference>
<dbReference type="Gene3D" id="3.90.25.10">
    <property type="entry name" value="UDP-galactose 4-epimerase, domain 1"/>
    <property type="match status" value="1"/>
</dbReference>
<dbReference type="HAMAP" id="MF_01601">
    <property type="entry name" value="Heptose_epimerase"/>
    <property type="match status" value="1"/>
</dbReference>
<dbReference type="InterPro" id="IPR001509">
    <property type="entry name" value="Epimerase_deHydtase"/>
</dbReference>
<dbReference type="InterPro" id="IPR011912">
    <property type="entry name" value="Heptose_epim"/>
</dbReference>
<dbReference type="InterPro" id="IPR036291">
    <property type="entry name" value="NAD(P)-bd_dom_sf"/>
</dbReference>
<dbReference type="NCBIfam" id="TIGR02197">
    <property type="entry name" value="heptose_epim"/>
    <property type="match status" value="1"/>
</dbReference>
<dbReference type="NCBIfam" id="NF008360">
    <property type="entry name" value="PRK11150.1"/>
    <property type="match status" value="1"/>
</dbReference>
<dbReference type="PANTHER" id="PTHR43103:SF3">
    <property type="entry name" value="ADP-L-GLYCERO-D-MANNO-HEPTOSE-6-EPIMERASE"/>
    <property type="match status" value="1"/>
</dbReference>
<dbReference type="PANTHER" id="PTHR43103">
    <property type="entry name" value="NUCLEOSIDE-DIPHOSPHATE-SUGAR EPIMERASE"/>
    <property type="match status" value="1"/>
</dbReference>
<dbReference type="Pfam" id="PF01370">
    <property type="entry name" value="Epimerase"/>
    <property type="match status" value="1"/>
</dbReference>
<dbReference type="SUPFAM" id="SSF51735">
    <property type="entry name" value="NAD(P)-binding Rossmann-fold domains"/>
    <property type="match status" value="1"/>
</dbReference>
<keyword id="KW-0119">Carbohydrate metabolism</keyword>
<keyword id="KW-0413">Isomerase</keyword>
<keyword id="KW-0521">NADP</keyword>
<evidence type="ECO:0000255" key="1">
    <source>
        <dbReference type="HAMAP-Rule" id="MF_01601"/>
    </source>
</evidence>
<feature type="chain" id="PRO_1000069366" description="ADP-L-glycero-D-manno-heptose-6-epimerase">
    <location>
        <begin position="1"/>
        <end position="309"/>
    </location>
</feature>
<feature type="active site" description="Proton acceptor" evidence="1">
    <location>
        <position position="139"/>
    </location>
</feature>
<feature type="active site" description="Proton acceptor" evidence="1">
    <location>
        <position position="177"/>
    </location>
</feature>
<feature type="binding site" evidence="1">
    <location>
        <begin position="10"/>
        <end position="11"/>
    </location>
    <ligand>
        <name>NADP(+)</name>
        <dbReference type="ChEBI" id="CHEBI:58349"/>
    </ligand>
</feature>
<feature type="binding site" evidence="1">
    <location>
        <begin position="31"/>
        <end position="32"/>
    </location>
    <ligand>
        <name>NADP(+)</name>
        <dbReference type="ChEBI" id="CHEBI:58349"/>
    </ligand>
</feature>
<feature type="binding site" evidence="1">
    <location>
        <position position="38"/>
    </location>
    <ligand>
        <name>NADP(+)</name>
        <dbReference type="ChEBI" id="CHEBI:58349"/>
    </ligand>
</feature>
<feature type="binding site" evidence="1">
    <location>
        <position position="53"/>
    </location>
    <ligand>
        <name>NADP(+)</name>
        <dbReference type="ChEBI" id="CHEBI:58349"/>
    </ligand>
</feature>
<feature type="binding site" evidence="1">
    <location>
        <begin position="75"/>
        <end position="79"/>
    </location>
    <ligand>
        <name>NADP(+)</name>
        <dbReference type="ChEBI" id="CHEBI:58349"/>
    </ligand>
</feature>
<feature type="binding site" evidence="1">
    <location>
        <position position="92"/>
    </location>
    <ligand>
        <name>NADP(+)</name>
        <dbReference type="ChEBI" id="CHEBI:58349"/>
    </ligand>
</feature>
<feature type="binding site" evidence="1">
    <location>
        <position position="143"/>
    </location>
    <ligand>
        <name>NADP(+)</name>
        <dbReference type="ChEBI" id="CHEBI:58349"/>
    </ligand>
</feature>
<feature type="binding site" evidence="1">
    <location>
        <position position="168"/>
    </location>
    <ligand>
        <name>substrate</name>
    </ligand>
</feature>
<feature type="binding site" evidence="1">
    <location>
        <position position="169"/>
    </location>
    <ligand>
        <name>NADP(+)</name>
        <dbReference type="ChEBI" id="CHEBI:58349"/>
    </ligand>
</feature>
<feature type="binding site" evidence="1">
    <location>
        <position position="177"/>
    </location>
    <ligand>
        <name>NADP(+)</name>
        <dbReference type="ChEBI" id="CHEBI:58349"/>
    </ligand>
</feature>
<feature type="binding site" evidence="1">
    <location>
        <position position="179"/>
    </location>
    <ligand>
        <name>substrate</name>
    </ligand>
</feature>
<feature type="binding site" evidence="1">
    <location>
        <position position="186"/>
    </location>
    <ligand>
        <name>substrate</name>
    </ligand>
</feature>
<feature type="binding site" evidence="1">
    <location>
        <begin position="200"/>
        <end position="203"/>
    </location>
    <ligand>
        <name>substrate</name>
    </ligand>
</feature>
<feature type="binding site" evidence="1">
    <location>
        <position position="208"/>
    </location>
    <ligand>
        <name>substrate</name>
    </ligand>
</feature>
<feature type="binding site" evidence="1">
    <location>
        <position position="271"/>
    </location>
    <ligand>
        <name>substrate</name>
    </ligand>
</feature>
<name>HLDD_SERP5</name>
<comment type="function">
    <text evidence="1">Catalyzes the interconversion between ADP-D-glycero-beta-D-manno-heptose and ADP-L-glycero-beta-D-manno-heptose via an epimerization at carbon 6 of the heptose.</text>
</comment>
<comment type="catalytic activity">
    <reaction evidence="1">
        <text>ADP-D-glycero-beta-D-manno-heptose = ADP-L-glycero-beta-D-manno-heptose</text>
        <dbReference type="Rhea" id="RHEA:17577"/>
        <dbReference type="ChEBI" id="CHEBI:59967"/>
        <dbReference type="ChEBI" id="CHEBI:61506"/>
        <dbReference type="EC" id="5.1.3.20"/>
    </reaction>
</comment>
<comment type="cofactor">
    <cofactor evidence="1">
        <name>NADP(+)</name>
        <dbReference type="ChEBI" id="CHEBI:58349"/>
    </cofactor>
    <text evidence="1">Binds 1 NADP(+) per subunit.</text>
</comment>
<comment type="pathway">
    <text evidence="1">Nucleotide-sugar biosynthesis; ADP-L-glycero-beta-D-manno-heptose biosynthesis; ADP-L-glycero-beta-D-manno-heptose from D-glycero-beta-D-manno-heptose 7-phosphate: step 4/4.</text>
</comment>
<comment type="subunit">
    <text evidence="1">Homopentamer.</text>
</comment>
<comment type="domain">
    <text evidence="1">Contains a large N-terminal NADP-binding domain, and a smaller C-terminal substrate-binding domain.</text>
</comment>
<comment type="similarity">
    <text evidence="1">Belongs to the NAD(P)-dependent epimerase/dehydratase family. HldD subfamily.</text>
</comment>
<sequence length="309" mass="34549">MIIVTGGAGMIGSNIIKALNDTGYRDILVVDNLKDGTKFANLVDLDIADYIDKEDFIANIIAGDDLGEIDAIFHEGACSSTTEWDGKYMMDNNYQYSKDLLHYCLDREIPFLYASSAATYGGREEFIEERQFEAPLNVYGYSKFLFDQYVREILPEAESQICGFRYFNVYGPREGHKGSMASVAFHLNGQINRGENPKLFDGSQDFKRDFIYVGDVAAVNLWFLKSGVSGIFNCGTGRAETFQAVADAVVDFHQKGAVENIPFPEKLKGRYQAFTQADLTKLRAAGYDAPFKTVAEGVKEYMAWLNRTA</sequence>
<organism>
    <name type="scientific">Serratia proteamaculans (strain 568)</name>
    <dbReference type="NCBI Taxonomy" id="399741"/>
    <lineage>
        <taxon>Bacteria</taxon>
        <taxon>Pseudomonadati</taxon>
        <taxon>Pseudomonadota</taxon>
        <taxon>Gammaproteobacteria</taxon>
        <taxon>Enterobacterales</taxon>
        <taxon>Yersiniaceae</taxon>
        <taxon>Serratia</taxon>
    </lineage>
</organism>
<accession>A8GLC8</accession>
<gene>
    <name evidence="1" type="primary">hldD</name>
    <name type="ordered locus">Spro_4825</name>
</gene>